<sequence length="472" mass="51592">MAKRVKILVVGDLMLDHYIWGSCERISPEAPVQVVKINNETYTLGGAGNVVRNLLSLGANVSVASVLGDDEAGKKIKEKLAELNVKDELILTEKGRESSIKSRIMASHQQVVRIDKESVVKINLEDELVLKVKENLANFKAVLLSDYGKGVLSEKVCQEIINECVKLKIPVLIDPKGSDYSKYKNATLLTPNKKEASEATNLKIKDKAELEKAIKQLKEELNLTYSIITISEEGIALYDDKLHIFAAKAKEVFDVTGAGDTVLATLGYMLANGADIKEAIKIANLAAAVVVAKIGSATASFSEIEQLLNSSFGANFEHKLKSIEELEEILSQKGKKKVVFTNGCFDILHAGHVKYLARARELGDLLVVGLNSDASVKRLKGEARPINSQDDRACVLSGLGFVDYVVIFDEDTPLNLITKIKPDVLVKGADYKGKEVVGSDIVKEVRLIDFVEGKSTTGIIKRIKDAKNDDKK</sequence>
<dbReference type="EC" id="2.7.1.167" evidence="1"/>
<dbReference type="EC" id="2.7.7.70" evidence="1"/>
<dbReference type="EMBL" id="CP000792">
    <property type="protein sequence ID" value="EAT97395.1"/>
    <property type="molecule type" value="Genomic_DNA"/>
</dbReference>
<dbReference type="RefSeq" id="WP_012139957.1">
    <property type="nucleotide sequence ID" value="NC_009802.2"/>
</dbReference>
<dbReference type="SMR" id="A7ZE26"/>
<dbReference type="STRING" id="360104.CCC13826_0577"/>
<dbReference type="KEGG" id="cco:CCC13826_0577"/>
<dbReference type="eggNOG" id="COG0615">
    <property type="taxonomic scope" value="Bacteria"/>
</dbReference>
<dbReference type="eggNOG" id="COG2870">
    <property type="taxonomic scope" value="Bacteria"/>
</dbReference>
<dbReference type="HOGENOM" id="CLU_021150_2_1_7"/>
<dbReference type="OrthoDB" id="9802794at2"/>
<dbReference type="UniPathway" id="UPA00356">
    <property type="reaction ID" value="UER00437"/>
</dbReference>
<dbReference type="UniPathway" id="UPA00356">
    <property type="reaction ID" value="UER00439"/>
</dbReference>
<dbReference type="Proteomes" id="UP000001121">
    <property type="component" value="Chromosome"/>
</dbReference>
<dbReference type="GO" id="GO:0005829">
    <property type="term" value="C:cytosol"/>
    <property type="evidence" value="ECO:0007669"/>
    <property type="project" value="TreeGrafter"/>
</dbReference>
<dbReference type="GO" id="GO:0005524">
    <property type="term" value="F:ATP binding"/>
    <property type="evidence" value="ECO:0007669"/>
    <property type="project" value="UniProtKB-UniRule"/>
</dbReference>
<dbReference type="GO" id="GO:0033785">
    <property type="term" value="F:heptose 7-phosphate kinase activity"/>
    <property type="evidence" value="ECO:0007669"/>
    <property type="project" value="UniProtKB-UniRule"/>
</dbReference>
<dbReference type="GO" id="GO:0033786">
    <property type="term" value="F:heptose-1-phosphate adenylyltransferase activity"/>
    <property type="evidence" value="ECO:0007669"/>
    <property type="project" value="UniProtKB-UniRule"/>
</dbReference>
<dbReference type="GO" id="GO:0016773">
    <property type="term" value="F:phosphotransferase activity, alcohol group as acceptor"/>
    <property type="evidence" value="ECO:0007669"/>
    <property type="project" value="InterPro"/>
</dbReference>
<dbReference type="GO" id="GO:0097171">
    <property type="term" value="P:ADP-L-glycero-beta-D-manno-heptose biosynthetic process"/>
    <property type="evidence" value="ECO:0007669"/>
    <property type="project" value="UniProtKB-UniPathway"/>
</dbReference>
<dbReference type="CDD" id="cd01172">
    <property type="entry name" value="RfaE_like"/>
    <property type="match status" value="1"/>
</dbReference>
<dbReference type="FunFam" id="3.40.1190.20:FF:000002">
    <property type="entry name" value="Bifunctional protein HldE"/>
    <property type="match status" value="1"/>
</dbReference>
<dbReference type="Gene3D" id="3.40.1190.20">
    <property type="match status" value="1"/>
</dbReference>
<dbReference type="Gene3D" id="3.40.50.620">
    <property type="entry name" value="HUPs"/>
    <property type="match status" value="1"/>
</dbReference>
<dbReference type="HAMAP" id="MF_01603">
    <property type="entry name" value="HldE"/>
    <property type="match status" value="1"/>
</dbReference>
<dbReference type="InterPro" id="IPR023030">
    <property type="entry name" value="Bifunc_HldE"/>
</dbReference>
<dbReference type="InterPro" id="IPR004821">
    <property type="entry name" value="Cyt_trans-like"/>
</dbReference>
<dbReference type="InterPro" id="IPR011611">
    <property type="entry name" value="PfkB_dom"/>
</dbReference>
<dbReference type="InterPro" id="IPR011913">
    <property type="entry name" value="RfaE_dom_I"/>
</dbReference>
<dbReference type="InterPro" id="IPR011914">
    <property type="entry name" value="RfaE_dom_II"/>
</dbReference>
<dbReference type="InterPro" id="IPR029056">
    <property type="entry name" value="Ribokinase-like"/>
</dbReference>
<dbReference type="InterPro" id="IPR014729">
    <property type="entry name" value="Rossmann-like_a/b/a_fold"/>
</dbReference>
<dbReference type="NCBIfam" id="TIGR00125">
    <property type="entry name" value="cyt_tran_rel"/>
    <property type="match status" value="1"/>
</dbReference>
<dbReference type="NCBIfam" id="TIGR02198">
    <property type="entry name" value="rfaE_dom_I"/>
    <property type="match status" value="1"/>
</dbReference>
<dbReference type="NCBIfam" id="TIGR02199">
    <property type="entry name" value="rfaE_dom_II"/>
    <property type="match status" value="1"/>
</dbReference>
<dbReference type="PANTHER" id="PTHR46969">
    <property type="entry name" value="BIFUNCTIONAL PROTEIN HLDE"/>
    <property type="match status" value="1"/>
</dbReference>
<dbReference type="PANTHER" id="PTHR46969:SF1">
    <property type="entry name" value="BIFUNCTIONAL PROTEIN HLDE"/>
    <property type="match status" value="1"/>
</dbReference>
<dbReference type="Pfam" id="PF01467">
    <property type="entry name" value="CTP_transf_like"/>
    <property type="match status" value="1"/>
</dbReference>
<dbReference type="Pfam" id="PF00294">
    <property type="entry name" value="PfkB"/>
    <property type="match status" value="1"/>
</dbReference>
<dbReference type="SUPFAM" id="SSF52374">
    <property type="entry name" value="Nucleotidylyl transferase"/>
    <property type="match status" value="1"/>
</dbReference>
<dbReference type="SUPFAM" id="SSF53613">
    <property type="entry name" value="Ribokinase-like"/>
    <property type="match status" value="1"/>
</dbReference>
<organism>
    <name type="scientific">Campylobacter concisus (strain 13826)</name>
    <dbReference type="NCBI Taxonomy" id="360104"/>
    <lineage>
        <taxon>Bacteria</taxon>
        <taxon>Pseudomonadati</taxon>
        <taxon>Campylobacterota</taxon>
        <taxon>Epsilonproteobacteria</taxon>
        <taxon>Campylobacterales</taxon>
        <taxon>Campylobacteraceae</taxon>
        <taxon>Campylobacter</taxon>
    </lineage>
</organism>
<name>HLDE_CAMC1</name>
<accession>A7ZE26</accession>
<feature type="chain" id="PRO_0000335554" description="Bifunctional protein HldE">
    <location>
        <begin position="1"/>
        <end position="472"/>
    </location>
</feature>
<feature type="region of interest" description="Ribokinase">
    <location>
        <begin position="1"/>
        <end position="315"/>
    </location>
</feature>
<feature type="region of interest" description="Cytidylyltransferase">
    <location>
        <begin position="340"/>
        <end position="472"/>
    </location>
</feature>
<feature type="active site" evidence="1">
    <location>
        <position position="260"/>
    </location>
</feature>
<feature type="binding site" evidence="1">
    <location>
        <begin position="192"/>
        <end position="195"/>
    </location>
    <ligand>
        <name>ATP</name>
        <dbReference type="ChEBI" id="CHEBI:30616"/>
    </ligand>
</feature>
<keyword id="KW-0067">ATP-binding</keyword>
<keyword id="KW-0119">Carbohydrate metabolism</keyword>
<keyword id="KW-0418">Kinase</keyword>
<keyword id="KW-0511">Multifunctional enzyme</keyword>
<keyword id="KW-0547">Nucleotide-binding</keyword>
<keyword id="KW-0548">Nucleotidyltransferase</keyword>
<keyword id="KW-0808">Transferase</keyword>
<reference key="1">
    <citation type="submission" date="2007-10" db="EMBL/GenBank/DDBJ databases">
        <title>Genome sequence of Campylobacter concisus 13826 isolated from human feces.</title>
        <authorList>
            <person name="Fouts D.E."/>
            <person name="Mongodin E.F."/>
            <person name="Puiu D."/>
            <person name="Sebastian Y."/>
            <person name="Miller W.G."/>
            <person name="Mandrell R.E."/>
            <person name="On S."/>
            <person name="Nelson K.E."/>
        </authorList>
    </citation>
    <scope>NUCLEOTIDE SEQUENCE [LARGE SCALE GENOMIC DNA]</scope>
    <source>
        <strain>13826</strain>
    </source>
</reference>
<comment type="function">
    <text evidence="1">Catalyzes the phosphorylation of D-glycero-D-manno-heptose 7-phosphate at the C-1 position to selectively form D-glycero-beta-D-manno-heptose-1,7-bisphosphate.</text>
</comment>
<comment type="function">
    <text evidence="1">Catalyzes the ADP transfer from ATP to D-glycero-beta-D-manno-heptose 1-phosphate, yielding ADP-D-glycero-beta-D-manno-heptose.</text>
</comment>
<comment type="catalytic activity">
    <reaction evidence="1">
        <text>D-glycero-beta-D-manno-heptose 7-phosphate + ATP = D-glycero-beta-D-manno-heptose 1,7-bisphosphate + ADP + H(+)</text>
        <dbReference type="Rhea" id="RHEA:27473"/>
        <dbReference type="ChEBI" id="CHEBI:15378"/>
        <dbReference type="ChEBI" id="CHEBI:30616"/>
        <dbReference type="ChEBI" id="CHEBI:60204"/>
        <dbReference type="ChEBI" id="CHEBI:60208"/>
        <dbReference type="ChEBI" id="CHEBI:456216"/>
        <dbReference type="EC" id="2.7.1.167"/>
    </reaction>
</comment>
<comment type="catalytic activity">
    <reaction evidence="1">
        <text>D-glycero-beta-D-manno-heptose 1-phosphate + ATP + H(+) = ADP-D-glycero-beta-D-manno-heptose + diphosphate</text>
        <dbReference type="Rhea" id="RHEA:27465"/>
        <dbReference type="ChEBI" id="CHEBI:15378"/>
        <dbReference type="ChEBI" id="CHEBI:30616"/>
        <dbReference type="ChEBI" id="CHEBI:33019"/>
        <dbReference type="ChEBI" id="CHEBI:59967"/>
        <dbReference type="ChEBI" id="CHEBI:61593"/>
        <dbReference type="EC" id="2.7.7.70"/>
    </reaction>
</comment>
<comment type="pathway">
    <text evidence="1">Nucleotide-sugar biosynthesis; ADP-L-glycero-beta-D-manno-heptose biosynthesis; ADP-L-glycero-beta-D-manno-heptose from D-glycero-beta-D-manno-heptose 7-phosphate: step 1/4.</text>
</comment>
<comment type="pathway">
    <text evidence="1">Nucleotide-sugar biosynthesis; ADP-L-glycero-beta-D-manno-heptose biosynthesis; ADP-L-glycero-beta-D-manno-heptose from D-glycero-beta-D-manno-heptose 7-phosphate: step 3/4.</text>
</comment>
<comment type="subunit">
    <text evidence="1">Homodimer.</text>
</comment>
<comment type="similarity">
    <text evidence="1">In the N-terminal section; belongs to the carbohydrate kinase PfkB family.</text>
</comment>
<comment type="similarity">
    <text evidence="1">In the C-terminal section; belongs to the cytidylyltransferase family.</text>
</comment>
<gene>
    <name evidence="1" type="primary">hldE</name>
    <name type="ordered locus">Ccon26_11780</name>
    <name type="ORF">CCC13826_0577</name>
</gene>
<evidence type="ECO:0000255" key="1">
    <source>
        <dbReference type="HAMAP-Rule" id="MF_01603"/>
    </source>
</evidence>
<protein>
    <recommendedName>
        <fullName evidence="1">Bifunctional protein HldE</fullName>
    </recommendedName>
    <domain>
        <recommendedName>
            <fullName evidence="1">D-beta-D-heptose 7-phosphate kinase</fullName>
            <ecNumber evidence="1">2.7.1.167</ecNumber>
        </recommendedName>
        <alternativeName>
            <fullName evidence="1">D-beta-D-heptose 7-phosphotransferase</fullName>
        </alternativeName>
        <alternativeName>
            <fullName evidence="1">D-glycero-beta-D-manno-heptose-7-phosphate kinase</fullName>
        </alternativeName>
    </domain>
    <domain>
        <recommendedName>
            <fullName evidence="1">D-beta-D-heptose 1-phosphate adenylyltransferase</fullName>
            <ecNumber evidence="1">2.7.7.70</ecNumber>
        </recommendedName>
        <alternativeName>
            <fullName evidence="1">D-glycero-beta-D-manno-heptose 1-phosphate adenylyltransferase</fullName>
        </alternativeName>
    </domain>
</protein>
<proteinExistence type="inferred from homology"/>